<organism>
    <name type="scientific">Woodwardia unigemmata</name>
    <name type="common">Chainfern</name>
    <name type="synonym">Woodwardia radicans var. unigemmata</name>
    <dbReference type="NCBI Taxonomy" id="120732"/>
    <lineage>
        <taxon>Eukaryota</taxon>
        <taxon>Viridiplantae</taxon>
        <taxon>Streptophyta</taxon>
        <taxon>Embryophyta</taxon>
        <taxon>Tracheophyta</taxon>
        <taxon>Polypodiopsida</taxon>
        <taxon>Polypodiidae</taxon>
        <taxon>Polypodiales</taxon>
        <taxon>Aspleniineae</taxon>
        <taxon>Blechnaceae</taxon>
        <taxon>Woodwardioideae</taxon>
        <taxon>Woodwardia</taxon>
    </lineage>
</organism>
<reference key="1">
    <citation type="submission" date="2002-08" db="EMBL/GenBank/DDBJ databases">
        <title>Phylogenetics, biogeography, and classification of the Woodwardioid ferns (Blechnaceae).</title>
        <authorList>
            <person name="Cranfill R."/>
            <person name="Kato M."/>
        </authorList>
    </citation>
    <scope>NUCLEOTIDE SEQUENCE [GENOMIC DNA]</scope>
</reference>
<geneLocation type="chloroplast"/>
<feature type="chain" id="PRO_0000132682" description="Small ribosomal subunit protein uS4c">
    <location>
        <begin position="1"/>
        <end position="185"/>
    </location>
</feature>
<feature type="domain" description="S4 RNA-binding">
    <location>
        <begin position="72"/>
        <end position="134"/>
    </location>
</feature>
<feature type="region of interest" description="Disordered" evidence="2">
    <location>
        <begin position="132"/>
        <end position="154"/>
    </location>
</feature>
<gene>
    <name type="primary">rps4</name>
</gene>
<protein>
    <recommendedName>
        <fullName evidence="3">Small ribosomal subunit protein uS4c</fullName>
    </recommendedName>
    <alternativeName>
        <fullName>30S ribosomal protein S4, chloroplastic</fullName>
    </alternativeName>
</protein>
<keyword id="KW-0150">Chloroplast</keyword>
<keyword id="KW-0934">Plastid</keyword>
<keyword id="KW-0687">Ribonucleoprotein</keyword>
<keyword id="KW-0689">Ribosomal protein</keyword>
<keyword id="KW-0694">RNA-binding</keyword>
<keyword id="KW-0699">rRNA-binding</keyword>
<comment type="function">
    <text evidence="1">One of the primary rRNA binding proteins, it binds directly to 16S rRNA where it nucleates assembly of the body of the 30S subunit.</text>
</comment>
<comment type="function">
    <text evidence="1">With S5 and S12 plays an important role in translational accuracy.</text>
</comment>
<comment type="subunit">
    <text evidence="1">Part of the 30S ribosomal subunit. Contacts protein S5. The interaction surface between S4 and S5 is involved in control of translational fidelity (By similarity).</text>
</comment>
<comment type="subcellular location">
    <subcellularLocation>
        <location>Plastid</location>
        <location>Chloroplast</location>
    </subcellularLocation>
</comment>
<comment type="similarity">
    <text evidence="3">Belongs to the universal ribosomal protein uS4 family.</text>
</comment>
<dbReference type="EMBL" id="AF533867">
    <property type="protein sequence ID" value="AAN34646.1"/>
    <property type="molecule type" value="Genomic_DNA"/>
</dbReference>
<dbReference type="SMR" id="P59152"/>
<dbReference type="GO" id="GO:0009507">
    <property type="term" value="C:chloroplast"/>
    <property type="evidence" value="ECO:0007669"/>
    <property type="project" value="UniProtKB-SubCell"/>
</dbReference>
<dbReference type="GO" id="GO:0015935">
    <property type="term" value="C:small ribosomal subunit"/>
    <property type="evidence" value="ECO:0007669"/>
    <property type="project" value="InterPro"/>
</dbReference>
<dbReference type="GO" id="GO:0019843">
    <property type="term" value="F:rRNA binding"/>
    <property type="evidence" value="ECO:0007669"/>
    <property type="project" value="UniProtKB-UniRule"/>
</dbReference>
<dbReference type="GO" id="GO:0003735">
    <property type="term" value="F:structural constituent of ribosome"/>
    <property type="evidence" value="ECO:0007669"/>
    <property type="project" value="InterPro"/>
</dbReference>
<dbReference type="GO" id="GO:0042274">
    <property type="term" value="P:ribosomal small subunit biogenesis"/>
    <property type="evidence" value="ECO:0007669"/>
    <property type="project" value="TreeGrafter"/>
</dbReference>
<dbReference type="GO" id="GO:0006412">
    <property type="term" value="P:translation"/>
    <property type="evidence" value="ECO:0007669"/>
    <property type="project" value="UniProtKB-UniRule"/>
</dbReference>
<dbReference type="CDD" id="cd00165">
    <property type="entry name" value="S4"/>
    <property type="match status" value="1"/>
</dbReference>
<dbReference type="FunFam" id="3.10.290.10:FF:000001">
    <property type="entry name" value="30S ribosomal protein S4"/>
    <property type="match status" value="1"/>
</dbReference>
<dbReference type="Gene3D" id="1.10.1050.10">
    <property type="entry name" value="Ribosomal Protein S4 Delta 41, Chain A, domain 1"/>
    <property type="match status" value="1"/>
</dbReference>
<dbReference type="Gene3D" id="3.10.290.10">
    <property type="entry name" value="RNA-binding S4 domain"/>
    <property type="match status" value="1"/>
</dbReference>
<dbReference type="HAMAP" id="MF_01306_B">
    <property type="entry name" value="Ribosomal_uS4_B"/>
    <property type="match status" value="1"/>
</dbReference>
<dbReference type="InterPro" id="IPR022801">
    <property type="entry name" value="Ribosomal_uS4"/>
</dbReference>
<dbReference type="InterPro" id="IPR005709">
    <property type="entry name" value="Ribosomal_uS4_bac-type"/>
</dbReference>
<dbReference type="InterPro" id="IPR018079">
    <property type="entry name" value="Ribosomal_uS4_CS"/>
</dbReference>
<dbReference type="InterPro" id="IPR001912">
    <property type="entry name" value="Ribosomal_uS4_N"/>
</dbReference>
<dbReference type="InterPro" id="IPR002942">
    <property type="entry name" value="S4_RNA-bd"/>
</dbReference>
<dbReference type="InterPro" id="IPR036986">
    <property type="entry name" value="S4_RNA-bd_sf"/>
</dbReference>
<dbReference type="NCBIfam" id="NF003717">
    <property type="entry name" value="PRK05327.1"/>
    <property type="match status" value="1"/>
</dbReference>
<dbReference type="PANTHER" id="PTHR11831">
    <property type="entry name" value="30S 40S RIBOSOMAL PROTEIN"/>
    <property type="match status" value="1"/>
</dbReference>
<dbReference type="PANTHER" id="PTHR11831:SF4">
    <property type="entry name" value="SMALL RIBOSOMAL SUBUNIT PROTEIN US4M"/>
    <property type="match status" value="1"/>
</dbReference>
<dbReference type="Pfam" id="PF00163">
    <property type="entry name" value="Ribosomal_S4"/>
    <property type="match status" value="1"/>
</dbReference>
<dbReference type="Pfam" id="PF01479">
    <property type="entry name" value="S4"/>
    <property type="match status" value="1"/>
</dbReference>
<dbReference type="SMART" id="SM01390">
    <property type="entry name" value="Ribosomal_S4"/>
    <property type="match status" value="1"/>
</dbReference>
<dbReference type="SMART" id="SM00363">
    <property type="entry name" value="S4"/>
    <property type="match status" value="1"/>
</dbReference>
<dbReference type="SUPFAM" id="SSF55174">
    <property type="entry name" value="Alpha-L RNA-binding motif"/>
    <property type="match status" value="1"/>
</dbReference>
<dbReference type="PROSITE" id="PS00632">
    <property type="entry name" value="RIBOSOMAL_S4"/>
    <property type="match status" value="1"/>
</dbReference>
<dbReference type="PROSITE" id="PS50889">
    <property type="entry name" value="S4"/>
    <property type="match status" value="1"/>
</dbReference>
<evidence type="ECO:0000250" key="1"/>
<evidence type="ECO:0000256" key="2">
    <source>
        <dbReference type="SAM" id="MobiDB-lite"/>
    </source>
</evidence>
<evidence type="ECO:0000305" key="3"/>
<proteinExistence type="inferred from homology"/>
<name>RR4_WOOUN</name>
<sequence>MGRGKTPNLGEFRVATDQSASRKISQFCVRLEAKQRLRFNYGLTERQLLKYVRIARKTRGSTGQVPPQLLEMRLDNVIFRLGMASTIPAARQLVNHRHILVNNRIVDVPSYRCKPKDIITVRNRPTSCNALKGESPGGGETPDHLTASLSEGSRPTGLVNRIANRESVNLNINELLVVEYYSRKA</sequence>
<accession>P59152</accession>